<keyword id="KW-0067">ATP-binding</keyword>
<keyword id="KW-0175">Coiled coil</keyword>
<keyword id="KW-0963">Cytoplasm</keyword>
<keyword id="KW-0206">Cytoskeleton</keyword>
<keyword id="KW-0493">Microtubule</keyword>
<keyword id="KW-0496">Mitochondrion</keyword>
<keyword id="KW-0505">Motor protein</keyword>
<keyword id="KW-0547">Nucleotide-binding</keyword>
<keyword id="KW-1185">Reference proteome</keyword>
<sequence>MDQGAMETLPEKPSEDEFSLALRNGLILCNVLNKVNPGSVLKVVENPITPAIQYADGAAQSAIQYFENMRNFLKAVEDMQLLTFGASDLEKGGSSNKVVDCILCLKGFYEWKQAGGVGVWRYGGTVRIVSFNRKGSSPPQYGIGSESTTDESVSLDESESSQYDQLLDFLHLSNEISAEESETAISLAFLFDHFALQLLHGYLKESDGINDMPLNEMVIDTLLNRVVKDFSAILVSQGAQLGSFLRKILKCDNGDLSRSEFLAAVFRYLQHRKDLVSKEFSKFCKCGGKLEFSRLNAREFSPGHVEAIGLQQKELEEVKSNFVETRSQVKQMQSEWQKELQRIVHHVKAMEVTSSSYHKVLEENRLLYNEVQDLKGTIRVYCRVRPFFQEQKDMQSTVDYIGENGNIIINNPFKQEKDARKIFSFNKVFGQTVSQEQIYIDTQPVIRSVLDGFNVCIFAYGQTGSGKTYTMSGPDLMTETTWGVNYRALRDLFQLSNARTHVVTYEIGVQMIEIYNEQVRDLLVSDGSSRRLDIRNNSQLNGLNVPDANLIPVSNTRDVLDLMRIGQKNRAVGATALNERSSRSHSVLTVHVQGKELASGSILRGCLHLVDLAGSERVEKSEAVGERLKEAQHINKSLSALGDVIYALAQKSSHVPYRNSKLTQVLQDSLGGQAKTLMFVHINPEVNAVGETISTLKFAQRVASIELGAARSNKETGEIRDLKDEISSLKSAMEKKEAELEQLRSGSIRNTTECQRARAVSPFHLPRTGNGAGTKAEASPQPNDGTRSYETRSCSTGKQRKSGFPSALRNREASPRMPNLAEERLNPSPSRRSLSTDRASTIKSRNKPDVTQNLPVSRTPFPARVPVVKSFSTVPLNPSAENNHRLHTDNSSEAFQNHQKLSARKLFPEIEEEHIRHALHIRQGGVKKTRAESSKAKAKQPSPARFQKLDVGISLRSDADSEAKVGNYQTQKGNNNHNVIHSRFQNFDVGISLFSDLCAGDKSDSTLKSDSSETDNEPPSKSKNAQRNSSKNSLNHKLRTIYAHEDTSLVDDKPSNGTAHIKEGNNNISMPEFRRSRSTHHARFMVP</sequence>
<comment type="function">
    <text evidence="7">Required for keeping the ATP levels stable and balancing the aerobic respiration pathways during seed germination at low temperature.</text>
</comment>
<comment type="subunit">
    <text evidence="7">Interacts (via C-terminus) with VDAC3.</text>
</comment>
<comment type="subcellular location">
    <subcellularLocation>
        <location evidence="11">Cytoplasm</location>
        <location evidence="11">Cytoskeleton</location>
    </subcellularLocation>
    <subcellularLocation>
        <location evidence="7">Mitochondrion</location>
    </subcellularLocation>
    <text evidence="7">Associated with VDAC3 in mitochondrion.</text>
</comment>
<comment type="tissue specificity">
    <text evidence="5">Expressed in roots, leaves, stems and flowers (at protein level).</text>
</comment>
<comment type="induction">
    <text evidence="6">Down-regulated by salicylic acid (SA).</text>
</comment>
<comment type="disruption phenotype">
    <text evidence="7">No visible phenotype under normal growth conditions.</text>
</comment>
<comment type="similarity">
    <text evidence="9">Belongs to the TRAFAC class myosin-kinesin ATPase superfamily. Kinesin family. KIN-14 subfamily.</text>
</comment>
<comment type="sequence caution" evidence="11">
    <conflict type="erroneous gene model prediction">
        <sequence resource="EMBL-CDS" id="AAB70034"/>
    </conflict>
</comment>
<feature type="chain" id="PRO_0000429024" description="Kinesin-like protein KIN-14F">
    <location>
        <begin position="1"/>
        <end position="1087"/>
    </location>
</feature>
<feature type="domain" description="Calponin-homology (CH)" evidence="2">
    <location>
        <begin position="1"/>
        <end position="110"/>
    </location>
</feature>
<feature type="domain" description="Kinesin motor" evidence="3">
    <location>
        <begin position="377"/>
        <end position="705"/>
    </location>
</feature>
<feature type="region of interest" description="Disordered" evidence="4">
    <location>
        <begin position="136"/>
        <end position="155"/>
    </location>
</feature>
<feature type="region of interest" description="Disordered" evidence="4">
    <location>
        <begin position="740"/>
        <end position="858"/>
    </location>
</feature>
<feature type="region of interest" description="Disordered" evidence="4">
    <location>
        <begin position="923"/>
        <end position="949"/>
    </location>
</feature>
<feature type="region of interest" description="Disordered" evidence="4">
    <location>
        <begin position="1004"/>
        <end position="1087"/>
    </location>
</feature>
<feature type="coiled-coil region" evidence="1">
    <location>
        <begin position="710"/>
        <end position="749"/>
    </location>
</feature>
<feature type="compositionally biased region" description="Polar residues" evidence="4">
    <location>
        <begin position="744"/>
        <end position="754"/>
    </location>
</feature>
<feature type="compositionally biased region" description="Polar residues" evidence="4">
    <location>
        <begin position="780"/>
        <end position="797"/>
    </location>
</feature>
<feature type="compositionally biased region" description="Polar residues" evidence="4">
    <location>
        <begin position="836"/>
        <end position="856"/>
    </location>
</feature>
<feature type="compositionally biased region" description="Polar residues" evidence="4">
    <location>
        <begin position="1017"/>
        <end position="1033"/>
    </location>
</feature>
<feature type="compositionally biased region" description="Basic and acidic residues" evidence="4">
    <location>
        <begin position="1042"/>
        <end position="1054"/>
    </location>
</feature>
<feature type="compositionally biased region" description="Basic residues" evidence="4">
    <location>
        <begin position="1076"/>
        <end position="1087"/>
    </location>
</feature>
<feature type="binding site" evidence="3">
    <location>
        <begin position="461"/>
        <end position="468"/>
    </location>
    <ligand>
        <name>ATP</name>
        <dbReference type="ChEBI" id="CHEBI:30616"/>
    </ligand>
</feature>
<feature type="sequence conflict" description="In Ref. 1; AAK92458." evidence="11" ref="1">
    <original>V</original>
    <variation>A</variation>
    <location>
        <position position="428"/>
    </location>
</feature>
<protein>
    <recommendedName>
        <fullName evidence="11">Kinesin-like protein KIN-14F</fullName>
    </recommendedName>
    <alternativeName>
        <fullName>AtKIN14h</fullName>
    </alternativeName>
    <alternativeName>
        <fullName evidence="10">Kinesin KP1</fullName>
    </alternativeName>
    <alternativeName>
        <fullName evidence="8">Kinesin-like protein 1</fullName>
        <shortName evidence="8">AtKP1</shortName>
    </alternativeName>
</protein>
<organism>
    <name type="scientific">Arabidopsis thaliana</name>
    <name type="common">Mouse-ear cress</name>
    <dbReference type="NCBI Taxonomy" id="3702"/>
    <lineage>
        <taxon>Eukaryota</taxon>
        <taxon>Viridiplantae</taxon>
        <taxon>Streptophyta</taxon>
        <taxon>Embryophyta</taxon>
        <taxon>Tracheophyta</taxon>
        <taxon>Spermatophyta</taxon>
        <taxon>Magnoliopsida</taxon>
        <taxon>eudicotyledons</taxon>
        <taxon>Gunneridae</taxon>
        <taxon>Pentapetalae</taxon>
        <taxon>rosids</taxon>
        <taxon>malvids</taxon>
        <taxon>Brassicales</taxon>
        <taxon>Brassicaceae</taxon>
        <taxon>Camelineae</taxon>
        <taxon>Arabidopsis</taxon>
    </lineage>
</organism>
<proteinExistence type="evidence at protein level"/>
<accession>Q8W1Y3</accession>
<accession>F4J373</accession>
<accession>O22240</accession>
<reference key="1">
    <citation type="journal article" date="2005" name="Cell Res.">
        <title>AtKP1, a kinesin-like protein, mainly localizes to mitochondria in Arabidopsis thaliana.</title>
        <authorList>
            <person name="Ni C.Z."/>
            <person name="Wang H.Q."/>
            <person name="Xu T."/>
            <person name="Qu Z."/>
            <person name="Liu G.Q."/>
        </authorList>
    </citation>
    <scope>NUCLEOTIDE SEQUENCE [MRNA]</scope>
    <scope>SUBCELLULAR LOCATION</scope>
    <scope>TISSUE SPECIFICITY</scope>
    <source>
        <tissue>Stem</tissue>
    </source>
</reference>
<reference key="2">
    <citation type="journal article" date="2000" name="Nature">
        <title>Sequence and analysis of chromosome 3 of the plant Arabidopsis thaliana.</title>
        <authorList>
            <person name="Salanoubat M."/>
            <person name="Lemcke K."/>
            <person name="Rieger M."/>
            <person name="Ansorge W."/>
            <person name="Unseld M."/>
            <person name="Fartmann B."/>
            <person name="Valle G."/>
            <person name="Bloecker H."/>
            <person name="Perez-Alonso M."/>
            <person name="Obermaier B."/>
            <person name="Delseny M."/>
            <person name="Boutry M."/>
            <person name="Grivell L.A."/>
            <person name="Mache R."/>
            <person name="Puigdomenech P."/>
            <person name="De Simone V."/>
            <person name="Choisne N."/>
            <person name="Artiguenave F."/>
            <person name="Robert C."/>
            <person name="Brottier P."/>
            <person name="Wincker P."/>
            <person name="Cattolico L."/>
            <person name="Weissenbach J."/>
            <person name="Saurin W."/>
            <person name="Quetier F."/>
            <person name="Schaefer M."/>
            <person name="Mueller-Auer S."/>
            <person name="Gabel C."/>
            <person name="Fuchs M."/>
            <person name="Benes V."/>
            <person name="Wurmbach E."/>
            <person name="Drzonek H."/>
            <person name="Erfle H."/>
            <person name="Jordan N."/>
            <person name="Bangert S."/>
            <person name="Wiedelmann R."/>
            <person name="Kranz H."/>
            <person name="Voss H."/>
            <person name="Holland R."/>
            <person name="Brandt P."/>
            <person name="Nyakatura G."/>
            <person name="Vezzi A."/>
            <person name="D'Angelo M."/>
            <person name="Pallavicini A."/>
            <person name="Toppo S."/>
            <person name="Simionati B."/>
            <person name="Conrad A."/>
            <person name="Hornischer K."/>
            <person name="Kauer G."/>
            <person name="Loehnert T.-H."/>
            <person name="Nordsiek G."/>
            <person name="Reichelt J."/>
            <person name="Scharfe M."/>
            <person name="Schoen O."/>
            <person name="Bargues M."/>
            <person name="Terol J."/>
            <person name="Climent J."/>
            <person name="Navarro P."/>
            <person name="Collado C."/>
            <person name="Perez-Perez A."/>
            <person name="Ottenwaelder B."/>
            <person name="Duchemin D."/>
            <person name="Cooke R."/>
            <person name="Laudie M."/>
            <person name="Berger-Llauro C."/>
            <person name="Purnelle B."/>
            <person name="Masuy D."/>
            <person name="de Haan M."/>
            <person name="Maarse A.C."/>
            <person name="Alcaraz J.-P."/>
            <person name="Cottet A."/>
            <person name="Casacuberta E."/>
            <person name="Monfort A."/>
            <person name="Argiriou A."/>
            <person name="Flores M."/>
            <person name="Liguori R."/>
            <person name="Vitale D."/>
            <person name="Mannhaupt G."/>
            <person name="Haase D."/>
            <person name="Schoof H."/>
            <person name="Rudd S."/>
            <person name="Zaccaria P."/>
            <person name="Mewes H.-W."/>
            <person name="Mayer K.F.X."/>
            <person name="Kaul S."/>
            <person name="Town C.D."/>
            <person name="Koo H.L."/>
            <person name="Tallon L.J."/>
            <person name="Jenkins J."/>
            <person name="Rooney T."/>
            <person name="Rizzo M."/>
            <person name="Walts A."/>
            <person name="Utterback T."/>
            <person name="Fujii C.Y."/>
            <person name="Shea T.P."/>
            <person name="Creasy T.H."/>
            <person name="Haas B."/>
            <person name="Maiti R."/>
            <person name="Wu D."/>
            <person name="Peterson J."/>
            <person name="Van Aken S."/>
            <person name="Pai G."/>
            <person name="Militscher J."/>
            <person name="Sellers P."/>
            <person name="Gill J.E."/>
            <person name="Feldblyum T.V."/>
            <person name="Preuss D."/>
            <person name="Lin X."/>
            <person name="Nierman W.C."/>
            <person name="Salzberg S.L."/>
            <person name="White O."/>
            <person name="Venter J.C."/>
            <person name="Fraser C.M."/>
            <person name="Kaneko T."/>
            <person name="Nakamura Y."/>
            <person name="Sato S."/>
            <person name="Kato T."/>
            <person name="Asamizu E."/>
            <person name="Sasamoto S."/>
            <person name="Kimura T."/>
            <person name="Idesawa K."/>
            <person name="Kawashima K."/>
            <person name="Kishida Y."/>
            <person name="Kiyokawa C."/>
            <person name="Kohara M."/>
            <person name="Matsumoto M."/>
            <person name="Matsuno A."/>
            <person name="Muraki A."/>
            <person name="Nakayama S."/>
            <person name="Nakazaki N."/>
            <person name="Shinpo S."/>
            <person name="Takeuchi C."/>
            <person name="Wada T."/>
            <person name="Watanabe A."/>
            <person name="Yamada M."/>
            <person name="Yasuda M."/>
            <person name="Tabata S."/>
        </authorList>
    </citation>
    <scope>NUCLEOTIDE SEQUENCE [LARGE SCALE GENOMIC DNA]</scope>
    <source>
        <strain>cv. Columbia</strain>
    </source>
</reference>
<reference key="3">
    <citation type="journal article" date="2017" name="Plant J.">
        <title>Araport11: a complete reannotation of the Arabidopsis thaliana reference genome.</title>
        <authorList>
            <person name="Cheng C.Y."/>
            <person name="Krishnakumar V."/>
            <person name="Chan A.P."/>
            <person name="Thibaud-Nissen F."/>
            <person name="Schobel S."/>
            <person name="Town C.D."/>
        </authorList>
    </citation>
    <scope>GENOME REANNOTATION</scope>
    <source>
        <strain>cv. Columbia</strain>
    </source>
</reference>
<reference key="4">
    <citation type="journal article" date="2001" name="BMC Genomics">
        <title>Kinesins in the Arabidopsis genome: a comparative analysis among eukaryotes.</title>
        <authorList>
            <person name="Reddy A.S."/>
            <person name="Day I.S."/>
        </authorList>
    </citation>
    <scope>GENE FAMILY</scope>
</reference>
<reference key="5">
    <citation type="journal article" date="2006" name="BMC Genomics">
        <title>Comprehensive comparative analysis of kinesins in photosynthetic eukaryotes.</title>
        <authorList>
            <person name="Richardson D.N."/>
            <person name="Simmons M.P."/>
            <person name="Reddy A.S."/>
        </authorList>
    </citation>
    <scope>GENE FAMILY</scope>
    <scope>NOMENCLATURE</scope>
</reference>
<reference key="6">
    <citation type="journal article" date="2009" name="Plant Mol. Biol.">
        <title>Recruitment of AtWHY1 and AtWHY3 by a distal element upstream of the kinesin gene AtKP1 to mediate transcriptional repression.</title>
        <authorList>
            <person name="Xiong J.Y."/>
            <person name="Lai C.X."/>
            <person name="Qu Z."/>
            <person name="Yang X.Y."/>
            <person name="Qin X.H."/>
            <person name="Liu G.Q."/>
        </authorList>
    </citation>
    <scope>INDUCTION</scope>
</reference>
<reference key="7">
    <citation type="journal article" date="2011" name="Plant Cell">
        <title>Arabidopsis kinesin KP1 specifically interacts with VDAC3, a mitochondrial protein, and regulates respiration during seed germination at low temperature.</title>
        <authorList>
            <person name="Yang X.Y."/>
            <person name="Chen Z.W."/>
            <person name="Xu T."/>
            <person name="Qu Z."/>
            <person name="Pan X.D."/>
            <person name="Qin X.H."/>
            <person name="Ren D.T."/>
            <person name="Liu G.Q."/>
        </authorList>
    </citation>
    <scope>FUNCTION</scope>
    <scope>INTERACTION WITH VDAC3</scope>
    <scope>SUBCELLULAR LOCATION</scope>
    <scope>DISRUPTION PHENOTYPE</scope>
</reference>
<reference key="8">
    <citation type="journal article" date="2012" name="Protoplasma">
        <title>Functions of the Arabidopsis kinesin superfamily of microtubule-based motor proteins.</title>
        <authorList>
            <person name="Zhu C."/>
            <person name="Dixit R."/>
        </authorList>
    </citation>
    <scope>REVIEW</scope>
</reference>
<evidence type="ECO:0000255" key="1"/>
<evidence type="ECO:0000255" key="2">
    <source>
        <dbReference type="PROSITE-ProRule" id="PRU00044"/>
    </source>
</evidence>
<evidence type="ECO:0000255" key="3">
    <source>
        <dbReference type="PROSITE-ProRule" id="PRU00283"/>
    </source>
</evidence>
<evidence type="ECO:0000256" key="4">
    <source>
        <dbReference type="SAM" id="MobiDB-lite"/>
    </source>
</evidence>
<evidence type="ECO:0000269" key="5">
    <source>
    </source>
</evidence>
<evidence type="ECO:0000269" key="6">
    <source>
    </source>
</evidence>
<evidence type="ECO:0000269" key="7">
    <source>
    </source>
</evidence>
<evidence type="ECO:0000303" key="8">
    <source>
    </source>
</evidence>
<evidence type="ECO:0000303" key="9">
    <source>
    </source>
</evidence>
<evidence type="ECO:0000303" key="10">
    <source>
    </source>
</evidence>
<evidence type="ECO:0000305" key="11"/>
<evidence type="ECO:0000312" key="12">
    <source>
        <dbReference type="Araport" id="AT3G44730"/>
    </source>
</evidence>
<evidence type="ECO:0000312" key="13">
    <source>
        <dbReference type="EMBL" id="AAB70034.1"/>
    </source>
</evidence>
<evidence type="ECO:0000312" key="14">
    <source>
        <dbReference type="EMBL" id="AAK92458.3"/>
    </source>
</evidence>
<gene>
    <name evidence="11" type="primary">KIN14F</name>
    <name evidence="14" type="synonym">KP1</name>
    <name evidence="12" type="ordered locus">At3g44730</name>
    <name evidence="13" type="ORF">T32N15.10</name>
</gene>
<name>KN14F_ARATH</name>
<dbReference type="EMBL" id="AF398149">
    <property type="protein sequence ID" value="AAK92458.3"/>
    <property type="molecule type" value="mRNA"/>
</dbReference>
<dbReference type="EMBL" id="AC002534">
    <property type="protein sequence ID" value="AAB70034.1"/>
    <property type="status" value="ALT_SEQ"/>
    <property type="molecule type" value="Genomic_DNA"/>
</dbReference>
<dbReference type="EMBL" id="CP002686">
    <property type="protein sequence ID" value="AEE77940.1"/>
    <property type="molecule type" value="Genomic_DNA"/>
</dbReference>
<dbReference type="EMBL" id="CP002686">
    <property type="protein sequence ID" value="ANM65657.1"/>
    <property type="molecule type" value="Genomic_DNA"/>
</dbReference>
<dbReference type="RefSeq" id="NP_001319684.1">
    <property type="nucleotide sequence ID" value="NM_001339170.1"/>
</dbReference>
<dbReference type="RefSeq" id="NP_190059.3">
    <property type="nucleotide sequence ID" value="NM_114341.4"/>
</dbReference>
<dbReference type="SMR" id="Q8W1Y3"/>
<dbReference type="BioGRID" id="8922">
    <property type="interactions" value="2"/>
</dbReference>
<dbReference type="FunCoup" id="Q8W1Y3">
    <property type="interactions" value="119"/>
</dbReference>
<dbReference type="STRING" id="3702.Q8W1Y3"/>
<dbReference type="GlyGen" id="Q8W1Y3">
    <property type="glycosylation" value="1 site"/>
</dbReference>
<dbReference type="iPTMnet" id="Q8W1Y3"/>
<dbReference type="PaxDb" id="3702-AT3G44730.1"/>
<dbReference type="ProteomicsDB" id="250748"/>
<dbReference type="EnsemblPlants" id="AT3G44730.1">
    <property type="protein sequence ID" value="AT3G44730.1"/>
    <property type="gene ID" value="AT3G44730"/>
</dbReference>
<dbReference type="EnsemblPlants" id="AT3G44730.4">
    <property type="protein sequence ID" value="AT3G44730.4"/>
    <property type="gene ID" value="AT3G44730"/>
</dbReference>
<dbReference type="GeneID" id="823602"/>
<dbReference type="Gramene" id="AT3G44730.1">
    <property type="protein sequence ID" value="AT3G44730.1"/>
    <property type="gene ID" value="AT3G44730"/>
</dbReference>
<dbReference type="Gramene" id="AT3G44730.4">
    <property type="protein sequence ID" value="AT3G44730.4"/>
    <property type="gene ID" value="AT3G44730"/>
</dbReference>
<dbReference type="KEGG" id="ath:AT3G44730"/>
<dbReference type="Araport" id="AT3G44730"/>
<dbReference type="TAIR" id="AT3G44730">
    <property type="gene designation" value="KP1"/>
</dbReference>
<dbReference type="eggNOG" id="KOG0239">
    <property type="taxonomic scope" value="Eukaryota"/>
</dbReference>
<dbReference type="HOGENOM" id="CLU_001485_0_0_1"/>
<dbReference type="InParanoid" id="Q8W1Y3"/>
<dbReference type="PRO" id="PR:Q8W1Y3"/>
<dbReference type="Proteomes" id="UP000006548">
    <property type="component" value="Chromosome 3"/>
</dbReference>
<dbReference type="ExpressionAtlas" id="Q8W1Y3">
    <property type="expression patterns" value="baseline and differential"/>
</dbReference>
<dbReference type="GO" id="GO:0005874">
    <property type="term" value="C:microtubule"/>
    <property type="evidence" value="ECO:0007669"/>
    <property type="project" value="UniProtKB-KW"/>
</dbReference>
<dbReference type="GO" id="GO:0005739">
    <property type="term" value="C:mitochondrion"/>
    <property type="evidence" value="ECO:0000314"/>
    <property type="project" value="UniProtKB"/>
</dbReference>
<dbReference type="GO" id="GO:0005524">
    <property type="term" value="F:ATP binding"/>
    <property type="evidence" value="ECO:0007669"/>
    <property type="project" value="UniProtKB-KW"/>
</dbReference>
<dbReference type="GO" id="GO:0008017">
    <property type="term" value="F:microtubule binding"/>
    <property type="evidence" value="ECO:0007669"/>
    <property type="project" value="InterPro"/>
</dbReference>
<dbReference type="GO" id="GO:0003777">
    <property type="term" value="F:microtubule motor activity"/>
    <property type="evidence" value="ECO:0007669"/>
    <property type="project" value="InterPro"/>
</dbReference>
<dbReference type="GO" id="GO:0009060">
    <property type="term" value="P:aerobic respiration"/>
    <property type="evidence" value="ECO:0000315"/>
    <property type="project" value="UniProtKB"/>
</dbReference>
<dbReference type="GO" id="GO:0007018">
    <property type="term" value="P:microtubule-based movement"/>
    <property type="evidence" value="ECO:0007669"/>
    <property type="project" value="InterPro"/>
</dbReference>
<dbReference type="GO" id="GO:0009845">
    <property type="term" value="P:seed germination"/>
    <property type="evidence" value="ECO:0000315"/>
    <property type="project" value="UniProtKB"/>
</dbReference>
<dbReference type="FunFam" id="3.40.850.10:FF:000086">
    <property type="entry name" value="kinesin-like protein KIN-14F"/>
    <property type="match status" value="1"/>
</dbReference>
<dbReference type="Gene3D" id="1.10.418.10">
    <property type="entry name" value="Calponin-like domain"/>
    <property type="match status" value="1"/>
</dbReference>
<dbReference type="Gene3D" id="3.40.850.10">
    <property type="entry name" value="Kinesin motor domain"/>
    <property type="match status" value="1"/>
</dbReference>
<dbReference type="InterPro" id="IPR001715">
    <property type="entry name" value="CH_dom"/>
</dbReference>
<dbReference type="InterPro" id="IPR036872">
    <property type="entry name" value="CH_dom_sf"/>
</dbReference>
<dbReference type="InterPro" id="IPR027640">
    <property type="entry name" value="Kinesin-like_fam"/>
</dbReference>
<dbReference type="InterPro" id="IPR001752">
    <property type="entry name" value="Kinesin_motor_dom"/>
</dbReference>
<dbReference type="InterPro" id="IPR036961">
    <property type="entry name" value="Kinesin_motor_dom_sf"/>
</dbReference>
<dbReference type="InterPro" id="IPR027417">
    <property type="entry name" value="P-loop_NTPase"/>
</dbReference>
<dbReference type="PANTHER" id="PTHR47972">
    <property type="entry name" value="KINESIN-LIKE PROTEIN KLP-3"/>
    <property type="match status" value="1"/>
</dbReference>
<dbReference type="PANTHER" id="PTHR47972:SF28">
    <property type="entry name" value="KINESIN-LIKE PROTEIN KLP-3"/>
    <property type="match status" value="1"/>
</dbReference>
<dbReference type="Pfam" id="PF00307">
    <property type="entry name" value="CH"/>
    <property type="match status" value="1"/>
</dbReference>
<dbReference type="Pfam" id="PF00225">
    <property type="entry name" value="Kinesin"/>
    <property type="match status" value="1"/>
</dbReference>
<dbReference type="PRINTS" id="PR00380">
    <property type="entry name" value="KINESINHEAVY"/>
</dbReference>
<dbReference type="SMART" id="SM00033">
    <property type="entry name" value="CH"/>
    <property type="match status" value="1"/>
</dbReference>
<dbReference type="SMART" id="SM00129">
    <property type="entry name" value="KISc"/>
    <property type="match status" value="1"/>
</dbReference>
<dbReference type="SUPFAM" id="SSF47576">
    <property type="entry name" value="Calponin-homology domain, CH-domain"/>
    <property type="match status" value="1"/>
</dbReference>
<dbReference type="SUPFAM" id="SSF52540">
    <property type="entry name" value="P-loop containing nucleoside triphosphate hydrolases"/>
    <property type="match status" value="1"/>
</dbReference>
<dbReference type="PROSITE" id="PS50021">
    <property type="entry name" value="CH"/>
    <property type="match status" value="1"/>
</dbReference>
<dbReference type="PROSITE" id="PS50067">
    <property type="entry name" value="KINESIN_MOTOR_2"/>
    <property type="match status" value="1"/>
</dbReference>